<name>TTC36_DANRE</name>
<keyword id="KW-1185">Reference proteome</keyword>
<keyword id="KW-0677">Repeat</keyword>
<keyword id="KW-0802">TPR repeat</keyword>
<reference key="1">
    <citation type="journal article" date="2013" name="Nature">
        <title>The zebrafish reference genome sequence and its relationship to the human genome.</title>
        <authorList>
            <person name="Howe K."/>
            <person name="Clark M.D."/>
            <person name="Torroja C.F."/>
            <person name="Torrance J."/>
            <person name="Berthelot C."/>
            <person name="Muffato M."/>
            <person name="Collins J.E."/>
            <person name="Humphray S."/>
            <person name="McLaren K."/>
            <person name="Matthews L."/>
            <person name="McLaren S."/>
            <person name="Sealy I."/>
            <person name="Caccamo M."/>
            <person name="Churcher C."/>
            <person name="Scott C."/>
            <person name="Barrett J.C."/>
            <person name="Koch R."/>
            <person name="Rauch G.J."/>
            <person name="White S."/>
            <person name="Chow W."/>
            <person name="Kilian B."/>
            <person name="Quintais L.T."/>
            <person name="Guerra-Assuncao J.A."/>
            <person name="Zhou Y."/>
            <person name="Gu Y."/>
            <person name="Yen J."/>
            <person name="Vogel J.H."/>
            <person name="Eyre T."/>
            <person name="Redmond S."/>
            <person name="Banerjee R."/>
            <person name="Chi J."/>
            <person name="Fu B."/>
            <person name="Langley E."/>
            <person name="Maguire S.F."/>
            <person name="Laird G.K."/>
            <person name="Lloyd D."/>
            <person name="Kenyon E."/>
            <person name="Donaldson S."/>
            <person name="Sehra H."/>
            <person name="Almeida-King J."/>
            <person name="Loveland J."/>
            <person name="Trevanion S."/>
            <person name="Jones M."/>
            <person name="Quail M."/>
            <person name="Willey D."/>
            <person name="Hunt A."/>
            <person name="Burton J."/>
            <person name="Sims S."/>
            <person name="McLay K."/>
            <person name="Plumb B."/>
            <person name="Davis J."/>
            <person name="Clee C."/>
            <person name="Oliver K."/>
            <person name="Clark R."/>
            <person name="Riddle C."/>
            <person name="Elliot D."/>
            <person name="Threadgold G."/>
            <person name="Harden G."/>
            <person name="Ware D."/>
            <person name="Begum S."/>
            <person name="Mortimore B."/>
            <person name="Kerry G."/>
            <person name="Heath P."/>
            <person name="Phillimore B."/>
            <person name="Tracey A."/>
            <person name="Corby N."/>
            <person name="Dunn M."/>
            <person name="Johnson C."/>
            <person name="Wood J."/>
            <person name="Clark S."/>
            <person name="Pelan S."/>
            <person name="Griffiths G."/>
            <person name="Smith M."/>
            <person name="Glithero R."/>
            <person name="Howden P."/>
            <person name="Barker N."/>
            <person name="Lloyd C."/>
            <person name="Stevens C."/>
            <person name="Harley J."/>
            <person name="Holt K."/>
            <person name="Panagiotidis G."/>
            <person name="Lovell J."/>
            <person name="Beasley H."/>
            <person name="Henderson C."/>
            <person name="Gordon D."/>
            <person name="Auger K."/>
            <person name="Wright D."/>
            <person name="Collins J."/>
            <person name="Raisen C."/>
            <person name="Dyer L."/>
            <person name="Leung K."/>
            <person name="Robertson L."/>
            <person name="Ambridge K."/>
            <person name="Leongamornlert D."/>
            <person name="McGuire S."/>
            <person name="Gilderthorp R."/>
            <person name="Griffiths C."/>
            <person name="Manthravadi D."/>
            <person name="Nichol S."/>
            <person name="Barker G."/>
            <person name="Whitehead S."/>
            <person name="Kay M."/>
            <person name="Brown J."/>
            <person name="Murnane C."/>
            <person name="Gray E."/>
            <person name="Humphries M."/>
            <person name="Sycamore N."/>
            <person name="Barker D."/>
            <person name="Saunders D."/>
            <person name="Wallis J."/>
            <person name="Babbage A."/>
            <person name="Hammond S."/>
            <person name="Mashreghi-Mohammadi M."/>
            <person name="Barr L."/>
            <person name="Martin S."/>
            <person name="Wray P."/>
            <person name="Ellington A."/>
            <person name="Matthews N."/>
            <person name="Ellwood M."/>
            <person name="Woodmansey R."/>
            <person name="Clark G."/>
            <person name="Cooper J."/>
            <person name="Tromans A."/>
            <person name="Grafham D."/>
            <person name="Skuce C."/>
            <person name="Pandian R."/>
            <person name="Andrews R."/>
            <person name="Harrison E."/>
            <person name="Kimberley A."/>
            <person name="Garnett J."/>
            <person name="Fosker N."/>
            <person name="Hall R."/>
            <person name="Garner P."/>
            <person name="Kelly D."/>
            <person name="Bird C."/>
            <person name="Palmer S."/>
            <person name="Gehring I."/>
            <person name="Berger A."/>
            <person name="Dooley C.M."/>
            <person name="Ersan-Urun Z."/>
            <person name="Eser C."/>
            <person name="Geiger H."/>
            <person name="Geisler M."/>
            <person name="Karotki L."/>
            <person name="Kirn A."/>
            <person name="Konantz J."/>
            <person name="Konantz M."/>
            <person name="Oberlander M."/>
            <person name="Rudolph-Geiger S."/>
            <person name="Teucke M."/>
            <person name="Lanz C."/>
            <person name="Raddatz G."/>
            <person name="Osoegawa K."/>
            <person name="Zhu B."/>
            <person name="Rapp A."/>
            <person name="Widaa S."/>
            <person name="Langford C."/>
            <person name="Yang F."/>
            <person name="Schuster S.C."/>
            <person name="Carter N.P."/>
            <person name="Harrow J."/>
            <person name="Ning Z."/>
            <person name="Herrero J."/>
            <person name="Searle S.M."/>
            <person name="Enright A."/>
            <person name="Geisler R."/>
            <person name="Plasterk R.H."/>
            <person name="Lee C."/>
            <person name="Westerfield M."/>
            <person name="de Jong P.J."/>
            <person name="Zon L.I."/>
            <person name="Postlethwait J.H."/>
            <person name="Nusslein-Volhard C."/>
            <person name="Hubbard T.J."/>
            <person name="Roest Crollius H."/>
            <person name="Rogers J."/>
            <person name="Stemple D.L."/>
        </authorList>
    </citation>
    <scope>NUCLEOTIDE SEQUENCE [LARGE SCALE GENOMIC DNA]</scope>
    <source>
        <strain>Tuebingen</strain>
    </source>
</reference>
<reference key="2">
    <citation type="submission" date="2004-11" db="EMBL/GenBank/DDBJ databases">
        <authorList>
            <consortium name="NIH - Zebrafish Gene Collection (ZGC) project"/>
        </authorList>
    </citation>
    <scope>NUCLEOTIDE SEQUENCE [LARGE SCALE MRNA]</scope>
    <source>
        <tissue>Liver</tissue>
    </source>
</reference>
<evidence type="ECO:0000305" key="1"/>
<dbReference type="EMBL" id="BX322577">
    <property type="protein sequence ID" value="CAP09349.1"/>
    <property type="molecule type" value="Genomic_DNA"/>
</dbReference>
<dbReference type="EMBL" id="BC085563">
    <property type="protein sequence ID" value="AAH85563.1"/>
    <property type="molecule type" value="mRNA"/>
</dbReference>
<dbReference type="RefSeq" id="NP_001007389.1">
    <property type="nucleotide sequence ID" value="NM_001007388.1"/>
</dbReference>
<dbReference type="SMR" id="A8E7I5"/>
<dbReference type="FunCoup" id="A8E7I5">
    <property type="interactions" value="130"/>
</dbReference>
<dbReference type="STRING" id="7955.ENSDARP00000017354"/>
<dbReference type="PaxDb" id="7955-ENSDARP00000017354"/>
<dbReference type="Ensembl" id="ENSDART00000024768">
    <property type="protein sequence ID" value="ENSDARP00000017354"/>
    <property type="gene ID" value="ENSDARG00000011693"/>
</dbReference>
<dbReference type="Ensembl" id="ENSDART00000191488">
    <property type="protein sequence ID" value="ENSDARP00000151482"/>
    <property type="gene ID" value="ENSDARG00000011693"/>
</dbReference>
<dbReference type="GeneID" id="492516"/>
<dbReference type="KEGG" id="dre:492516"/>
<dbReference type="AGR" id="ZFIN:ZDB-GENE-041114-87"/>
<dbReference type="CTD" id="143941"/>
<dbReference type="ZFIN" id="ZDB-GENE-041114-87">
    <property type="gene designation" value="ttc36"/>
</dbReference>
<dbReference type="eggNOG" id="KOG4555">
    <property type="taxonomic scope" value="Eukaryota"/>
</dbReference>
<dbReference type="HOGENOM" id="CLU_1464567_0_0_1"/>
<dbReference type="InParanoid" id="A8E7I5"/>
<dbReference type="OMA" id="CNQMLCE"/>
<dbReference type="OrthoDB" id="539634at2759"/>
<dbReference type="PhylomeDB" id="A8E7I5"/>
<dbReference type="TreeFam" id="TF105820"/>
<dbReference type="PRO" id="PR:A8E7I5"/>
<dbReference type="Proteomes" id="UP000000437">
    <property type="component" value="Chromosome 18"/>
</dbReference>
<dbReference type="Bgee" id="ENSDARG00000011693">
    <property type="expression patterns" value="Expressed in liver and 13 other cell types or tissues"/>
</dbReference>
<dbReference type="GO" id="GO:0060271">
    <property type="term" value="P:cilium assembly"/>
    <property type="evidence" value="ECO:0000315"/>
    <property type="project" value="ZFIN"/>
</dbReference>
<dbReference type="GO" id="GO:0061371">
    <property type="term" value="P:determination of heart left/right asymmetry"/>
    <property type="evidence" value="ECO:0000315"/>
    <property type="project" value="ZFIN"/>
</dbReference>
<dbReference type="GO" id="GO:0032474">
    <property type="term" value="P:otolith morphogenesis"/>
    <property type="evidence" value="ECO:0000315"/>
    <property type="project" value="ZFIN"/>
</dbReference>
<dbReference type="GO" id="GO:0006570">
    <property type="term" value="P:tyrosine metabolic process"/>
    <property type="evidence" value="ECO:0000318"/>
    <property type="project" value="GO_Central"/>
</dbReference>
<dbReference type="FunFam" id="1.25.40.10:FF:000213">
    <property type="entry name" value="Tetratricopeptide repeat domain 36"/>
    <property type="match status" value="1"/>
</dbReference>
<dbReference type="Gene3D" id="1.25.40.10">
    <property type="entry name" value="Tetratricopeptide repeat domain"/>
    <property type="match status" value="1"/>
</dbReference>
<dbReference type="InterPro" id="IPR011990">
    <property type="entry name" value="TPR-like_helical_dom_sf"/>
</dbReference>
<dbReference type="InterPro" id="IPR019734">
    <property type="entry name" value="TPR_rpt"/>
</dbReference>
<dbReference type="InterPro" id="IPR038906">
    <property type="entry name" value="TTC36"/>
</dbReference>
<dbReference type="PANTHER" id="PTHR21405">
    <property type="entry name" value="CDNA SEQUENCE BC021608"/>
    <property type="match status" value="1"/>
</dbReference>
<dbReference type="PANTHER" id="PTHR21405:SF0">
    <property type="entry name" value="TETRATRICOPEPTIDE REPEAT PROTEIN 36"/>
    <property type="match status" value="1"/>
</dbReference>
<dbReference type="Pfam" id="PF13181">
    <property type="entry name" value="TPR_8"/>
    <property type="match status" value="1"/>
</dbReference>
<dbReference type="SMART" id="SM00028">
    <property type="entry name" value="TPR"/>
    <property type="match status" value="3"/>
</dbReference>
<dbReference type="SUPFAM" id="SSF48452">
    <property type="entry name" value="TPR-like"/>
    <property type="match status" value="1"/>
</dbReference>
<dbReference type="PROSITE" id="PS50293">
    <property type="entry name" value="TPR_REGION"/>
    <property type="match status" value="1"/>
</dbReference>
<accession>A8E7I5</accession>
<accession>Q5U3F6</accession>
<organism>
    <name type="scientific">Danio rerio</name>
    <name type="common">Zebrafish</name>
    <name type="synonym">Brachydanio rerio</name>
    <dbReference type="NCBI Taxonomy" id="7955"/>
    <lineage>
        <taxon>Eukaryota</taxon>
        <taxon>Metazoa</taxon>
        <taxon>Chordata</taxon>
        <taxon>Craniata</taxon>
        <taxon>Vertebrata</taxon>
        <taxon>Euteleostomi</taxon>
        <taxon>Actinopterygii</taxon>
        <taxon>Neopterygii</taxon>
        <taxon>Teleostei</taxon>
        <taxon>Ostariophysi</taxon>
        <taxon>Cypriniformes</taxon>
        <taxon>Danionidae</taxon>
        <taxon>Danioninae</taxon>
        <taxon>Danio</taxon>
    </lineage>
</organism>
<sequence length="187" mass="20306">MASAHDRAVLQAIFNPTSPIGDVPGLNQEEELMDDDSAFDPELVKQVKDLELQGVSSAESGDLPAALQHFNQAISVLPQRASAYNNRAQTKRLLGDTKGAVEDLEHAISLSNGKGRSACQALVQRGLLLRLSGHDEEARLDFERAAALGSEFARQQAVILNPYAALCNRMLSEVISKLRNPEVSEMQ</sequence>
<protein>
    <recommendedName>
        <fullName>Tetratricopeptide repeat protein 36</fullName>
        <shortName>TPR repeat protein 36</shortName>
    </recommendedName>
</protein>
<comment type="similarity">
    <text evidence="1">Belongs to the TTC36 family.</text>
</comment>
<proteinExistence type="evidence at transcript level"/>
<gene>
    <name type="primary">ttc36</name>
    <name type="ORF">si:rp71-52f21.2</name>
    <name type="ORF">zgc:103600</name>
</gene>
<feature type="chain" id="PRO_0000332182" description="Tetratricopeptide repeat protein 36">
    <location>
        <begin position="1"/>
        <end position="187"/>
    </location>
</feature>
<feature type="repeat" description="TPR 1">
    <location>
        <begin position="47"/>
        <end position="80"/>
    </location>
</feature>
<feature type="repeat" description="TPR 2">
    <location>
        <begin position="82"/>
        <end position="114"/>
    </location>
</feature>
<feature type="repeat" description="TPR 3">
    <location>
        <begin position="119"/>
        <end position="152"/>
    </location>
</feature>
<feature type="sequence conflict" description="In Ref. 2; AAH85563." evidence="1" ref="2">
    <original>K</original>
    <variation>T</variation>
    <location>
        <position position="114"/>
    </location>
</feature>
<feature type="sequence conflict" description="In Ref. 2; AAH85563." evidence="1" ref="2">
    <original>HDE</original>
    <variation>RDG</variation>
    <location>
        <begin position="134"/>
        <end position="136"/>
    </location>
</feature>